<comment type="function">
    <text evidence="1">Can catalyze the hydrolysis of ATP in the presence of single-stranded DNA, the ATP-dependent uptake of single-stranded DNA by duplex DNA, and the ATP-dependent hybridization of homologous single-stranded DNAs. It interacts with LexA causing its activation and leading to its autocatalytic cleavage.</text>
</comment>
<comment type="subcellular location">
    <subcellularLocation>
        <location evidence="1">Cytoplasm</location>
    </subcellularLocation>
</comment>
<comment type="similarity">
    <text evidence="1">Belongs to the RecA family.</text>
</comment>
<reference key="1">
    <citation type="journal article" date="2001" name="Lancet">
        <title>Whole genome sequencing of meticillin-resistant Staphylococcus aureus.</title>
        <authorList>
            <person name="Kuroda M."/>
            <person name="Ohta T."/>
            <person name="Uchiyama I."/>
            <person name="Baba T."/>
            <person name="Yuzawa H."/>
            <person name="Kobayashi I."/>
            <person name="Cui L."/>
            <person name="Oguchi A."/>
            <person name="Aoki K."/>
            <person name="Nagai Y."/>
            <person name="Lian J.-Q."/>
            <person name="Ito T."/>
            <person name="Kanamori M."/>
            <person name="Matsumaru H."/>
            <person name="Maruyama A."/>
            <person name="Murakami H."/>
            <person name="Hosoyama A."/>
            <person name="Mizutani-Ui Y."/>
            <person name="Takahashi N.K."/>
            <person name="Sawano T."/>
            <person name="Inoue R."/>
            <person name="Kaito C."/>
            <person name="Sekimizu K."/>
            <person name="Hirakawa H."/>
            <person name="Kuhara S."/>
            <person name="Goto S."/>
            <person name="Yabuzaki J."/>
            <person name="Kanehisa M."/>
            <person name="Yamashita A."/>
            <person name="Oshima K."/>
            <person name="Furuya K."/>
            <person name="Yoshino C."/>
            <person name="Shiba T."/>
            <person name="Hattori M."/>
            <person name="Ogasawara N."/>
            <person name="Hayashi H."/>
            <person name="Hiramatsu K."/>
        </authorList>
    </citation>
    <scope>NUCLEOTIDE SEQUENCE [LARGE SCALE GENOMIC DNA]</scope>
    <source>
        <strain>Mu50 / ATCC 700699</strain>
    </source>
</reference>
<accession>P68843</accession>
<accession>Q02350</accession>
<keyword id="KW-0067">ATP-binding</keyword>
<keyword id="KW-0963">Cytoplasm</keyword>
<keyword id="KW-0227">DNA damage</keyword>
<keyword id="KW-0233">DNA recombination</keyword>
<keyword id="KW-0234">DNA repair</keyword>
<keyword id="KW-0238">DNA-binding</keyword>
<keyword id="KW-0547">Nucleotide-binding</keyword>
<keyword id="KW-0742">SOS response</keyword>
<protein>
    <recommendedName>
        <fullName evidence="1">Protein RecA</fullName>
    </recommendedName>
    <alternativeName>
        <fullName evidence="1">Recombinase A</fullName>
    </alternativeName>
</protein>
<gene>
    <name evidence="1" type="primary">recA</name>
    <name type="ordered locus">SAV1285</name>
</gene>
<name>RECA_STAAM</name>
<proteinExistence type="inferred from homology"/>
<dbReference type="EMBL" id="BA000017">
    <property type="protein sequence ID" value="BAB57447.1"/>
    <property type="molecule type" value="Genomic_DNA"/>
</dbReference>
<dbReference type="RefSeq" id="WP_000368166.1">
    <property type="nucleotide sequence ID" value="NC_002758.2"/>
</dbReference>
<dbReference type="SMR" id="P68843"/>
<dbReference type="KEGG" id="sav:SAV1285"/>
<dbReference type="HOGENOM" id="CLU_040469_1_2_9"/>
<dbReference type="PhylomeDB" id="P68843"/>
<dbReference type="Proteomes" id="UP000002481">
    <property type="component" value="Chromosome"/>
</dbReference>
<dbReference type="GO" id="GO:0005829">
    <property type="term" value="C:cytosol"/>
    <property type="evidence" value="ECO:0007669"/>
    <property type="project" value="TreeGrafter"/>
</dbReference>
<dbReference type="GO" id="GO:0005524">
    <property type="term" value="F:ATP binding"/>
    <property type="evidence" value="ECO:0007669"/>
    <property type="project" value="UniProtKB-UniRule"/>
</dbReference>
<dbReference type="GO" id="GO:0016887">
    <property type="term" value="F:ATP hydrolysis activity"/>
    <property type="evidence" value="ECO:0007669"/>
    <property type="project" value="InterPro"/>
</dbReference>
<dbReference type="GO" id="GO:0140664">
    <property type="term" value="F:ATP-dependent DNA damage sensor activity"/>
    <property type="evidence" value="ECO:0007669"/>
    <property type="project" value="InterPro"/>
</dbReference>
<dbReference type="GO" id="GO:0003684">
    <property type="term" value="F:damaged DNA binding"/>
    <property type="evidence" value="ECO:0007669"/>
    <property type="project" value="UniProtKB-UniRule"/>
</dbReference>
<dbReference type="GO" id="GO:0003697">
    <property type="term" value="F:single-stranded DNA binding"/>
    <property type="evidence" value="ECO:0007669"/>
    <property type="project" value="UniProtKB-UniRule"/>
</dbReference>
<dbReference type="GO" id="GO:0006310">
    <property type="term" value="P:DNA recombination"/>
    <property type="evidence" value="ECO:0007669"/>
    <property type="project" value="UniProtKB-UniRule"/>
</dbReference>
<dbReference type="GO" id="GO:0006281">
    <property type="term" value="P:DNA repair"/>
    <property type="evidence" value="ECO:0007669"/>
    <property type="project" value="UniProtKB-UniRule"/>
</dbReference>
<dbReference type="GO" id="GO:0009432">
    <property type="term" value="P:SOS response"/>
    <property type="evidence" value="ECO:0007669"/>
    <property type="project" value="UniProtKB-UniRule"/>
</dbReference>
<dbReference type="CDD" id="cd00983">
    <property type="entry name" value="RecA"/>
    <property type="match status" value="1"/>
</dbReference>
<dbReference type="FunFam" id="3.40.50.300:FF:000087">
    <property type="entry name" value="Recombinase RecA"/>
    <property type="match status" value="1"/>
</dbReference>
<dbReference type="Gene3D" id="3.40.50.300">
    <property type="entry name" value="P-loop containing nucleotide triphosphate hydrolases"/>
    <property type="match status" value="1"/>
</dbReference>
<dbReference type="HAMAP" id="MF_00268">
    <property type="entry name" value="RecA"/>
    <property type="match status" value="1"/>
</dbReference>
<dbReference type="InterPro" id="IPR003593">
    <property type="entry name" value="AAA+_ATPase"/>
</dbReference>
<dbReference type="InterPro" id="IPR013765">
    <property type="entry name" value="DNA_recomb/repair_RecA"/>
</dbReference>
<dbReference type="InterPro" id="IPR020584">
    <property type="entry name" value="DNA_recomb/repair_RecA_CS"/>
</dbReference>
<dbReference type="InterPro" id="IPR027417">
    <property type="entry name" value="P-loop_NTPase"/>
</dbReference>
<dbReference type="InterPro" id="IPR049261">
    <property type="entry name" value="RecA-like_C"/>
</dbReference>
<dbReference type="InterPro" id="IPR049428">
    <property type="entry name" value="RecA-like_N"/>
</dbReference>
<dbReference type="InterPro" id="IPR020588">
    <property type="entry name" value="RecA_ATP-bd"/>
</dbReference>
<dbReference type="InterPro" id="IPR023400">
    <property type="entry name" value="RecA_C_sf"/>
</dbReference>
<dbReference type="InterPro" id="IPR020587">
    <property type="entry name" value="RecA_monomer-monomer_interface"/>
</dbReference>
<dbReference type="NCBIfam" id="TIGR02012">
    <property type="entry name" value="tigrfam_recA"/>
    <property type="match status" value="1"/>
</dbReference>
<dbReference type="PANTHER" id="PTHR45900:SF1">
    <property type="entry name" value="MITOCHONDRIAL DNA REPAIR PROTEIN RECA HOMOLOG-RELATED"/>
    <property type="match status" value="1"/>
</dbReference>
<dbReference type="PANTHER" id="PTHR45900">
    <property type="entry name" value="RECA"/>
    <property type="match status" value="1"/>
</dbReference>
<dbReference type="Pfam" id="PF00154">
    <property type="entry name" value="RecA"/>
    <property type="match status" value="1"/>
</dbReference>
<dbReference type="Pfam" id="PF21096">
    <property type="entry name" value="RecA_C"/>
    <property type="match status" value="1"/>
</dbReference>
<dbReference type="PRINTS" id="PR00142">
    <property type="entry name" value="RECA"/>
</dbReference>
<dbReference type="SMART" id="SM00382">
    <property type="entry name" value="AAA"/>
    <property type="match status" value="1"/>
</dbReference>
<dbReference type="SUPFAM" id="SSF52540">
    <property type="entry name" value="P-loop containing nucleoside triphosphate hydrolases"/>
    <property type="match status" value="1"/>
</dbReference>
<dbReference type="SUPFAM" id="SSF54752">
    <property type="entry name" value="RecA protein, C-terminal domain"/>
    <property type="match status" value="1"/>
</dbReference>
<dbReference type="PROSITE" id="PS00321">
    <property type="entry name" value="RECA_1"/>
    <property type="match status" value="1"/>
</dbReference>
<dbReference type="PROSITE" id="PS50162">
    <property type="entry name" value="RECA_2"/>
    <property type="match status" value="1"/>
</dbReference>
<dbReference type="PROSITE" id="PS50163">
    <property type="entry name" value="RECA_3"/>
    <property type="match status" value="1"/>
</dbReference>
<organism>
    <name type="scientific">Staphylococcus aureus (strain Mu50 / ATCC 700699)</name>
    <dbReference type="NCBI Taxonomy" id="158878"/>
    <lineage>
        <taxon>Bacteria</taxon>
        <taxon>Bacillati</taxon>
        <taxon>Bacillota</taxon>
        <taxon>Bacilli</taxon>
        <taxon>Bacillales</taxon>
        <taxon>Staphylococcaceae</taxon>
        <taxon>Staphylococcus</taxon>
    </lineage>
</organism>
<feature type="chain" id="PRO_0000122839" description="Protein RecA">
    <location>
        <begin position="1"/>
        <end position="347"/>
    </location>
</feature>
<feature type="region of interest" description="Disordered" evidence="2">
    <location>
        <begin position="325"/>
        <end position="347"/>
    </location>
</feature>
<feature type="compositionally biased region" description="Basic and acidic residues" evidence="2">
    <location>
        <begin position="338"/>
        <end position="347"/>
    </location>
</feature>
<feature type="binding site" evidence="1">
    <location>
        <begin position="65"/>
        <end position="72"/>
    </location>
    <ligand>
        <name>ATP</name>
        <dbReference type="ChEBI" id="CHEBI:30616"/>
    </ligand>
</feature>
<evidence type="ECO:0000255" key="1">
    <source>
        <dbReference type="HAMAP-Rule" id="MF_00268"/>
    </source>
</evidence>
<evidence type="ECO:0000256" key="2">
    <source>
        <dbReference type="SAM" id="MobiDB-lite"/>
    </source>
</evidence>
<sequence length="347" mass="37657">MDNDRQKALDTVIKNMEKSFGKGAVMKLGDNIGRRVSTTSTGSVTLDNALGVGGYPKGRIIEIYGPESSGKTTVALHAIAEVQSNGGVAAFIDAEHALDPEYAQALGVDIDNLYLSQPDHGEQGLEIAEAFVRSGAVDIVVVDSVAALTPKAEIEGEMGDTHVGLQARLMSQALRKLSGAISKSNTTAIFINQIREKVGVMFGNPETTPGGRALKFYSSVRLEVRRAEQLKQGQEIVGNRTKIKVVKNKVAPPFRVAEVDIMYGQGISKEGELIDLGVENDIVDKSGAWYSYNGERMGQGKENVKMYLKENPQIKEEIDRKLREKLGISDGDVEETEDAPKSLFDEE</sequence>